<proteinExistence type="evidence at protein level"/>
<keyword id="KW-0175">Coiled coil</keyword>
<keyword id="KW-0963">Cytoplasm</keyword>
<keyword id="KW-0325">Glycoprotein</keyword>
<keyword id="KW-0472">Membrane</keyword>
<keyword id="KW-0539">Nucleus</keyword>
<keyword id="KW-0597">Phosphoprotein</keyword>
<keyword id="KW-1267">Proteomics identification</keyword>
<keyword id="KW-1185">Reference proteome</keyword>
<keyword id="KW-0732">Signal</keyword>
<keyword id="KW-0812">Transmembrane</keyword>
<keyword id="KW-1133">Transmembrane helix</keyword>
<protein>
    <recommendedName>
        <fullName>Pituitary tumor-transforming gene 1 protein-interacting protein</fullName>
    </recommendedName>
    <alternativeName>
        <fullName>Pituitary tumor-transforming gene protein-binding factor</fullName>
        <shortName>PBF</shortName>
        <shortName>PTTG-binding factor</shortName>
    </alternativeName>
</protein>
<reference key="1">
    <citation type="journal article" date="1998" name="Genomics">
        <title>Cloning of a novel human putative type Ia integral membrane protein mapping to 21q22.3.</title>
        <authorList>
            <person name="Yaspo M.-L."/>
            <person name="Aaltonen J."/>
            <person name="Horelli-Kuitunen N."/>
            <person name="Peltonen L."/>
            <person name="Lehrach H."/>
        </authorList>
    </citation>
    <scope>NUCLEOTIDE SEQUENCE [MRNA]</scope>
    <source>
        <tissue>Thymus</tissue>
    </source>
</reference>
<reference key="2">
    <citation type="journal article" date="2000" name="J. Biol. Chem.">
        <title>A novel binding factor facilitates nuclear translocation and transcriptional activation function of the pituitary tumor-transforming gene product.</title>
        <authorList>
            <person name="Chien W."/>
            <person name="Pei L."/>
        </authorList>
    </citation>
    <scope>NUCLEOTIDE SEQUENCE [MRNA]</scope>
    <scope>CHARACTERIZATION</scope>
    <scope>SUBCELLULAR LOCATION</scope>
    <scope>INTERACTION WITH PTTG1</scope>
</reference>
<reference key="3">
    <citation type="journal article" date="2004" name="Nat. Genet.">
        <title>Complete sequencing and characterization of 21,243 full-length human cDNAs.</title>
        <authorList>
            <person name="Ota T."/>
            <person name="Suzuki Y."/>
            <person name="Nishikawa T."/>
            <person name="Otsuki T."/>
            <person name="Sugiyama T."/>
            <person name="Irie R."/>
            <person name="Wakamatsu A."/>
            <person name="Hayashi K."/>
            <person name="Sato H."/>
            <person name="Nagai K."/>
            <person name="Kimura K."/>
            <person name="Makita H."/>
            <person name="Sekine M."/>
            <person name="Obayashi M."/>
            <person name="Nishi T."/>
            <person name="Shibahara T."/>
            <person name="Tanaka T."/>
            <person name="Ishii S."/>
            <person name="Yamamoto J."/>
            <person name="Saito K."/>
            <person name="Kawai Y."/>
            <person name="Isono Y."/>
            <person name="Nakamura Y."/>
            <person name="Nagahari K."/>
            <person name="Murakami K."/>
            <person name="Yasuda T."/>
            <person name="Iwayanagi T."/>
            <person name="Wagatsuma M."/>
            <person name="Shiratori A."/>
            <person name="Sudo H."/>
            <person name="Hosoiri T."/>
            <person name="Kaku Y."/>
            <person name="Kodaira H."/>
            <person name="Kondo H."/>
            <person name="Sugawara M."/>
            <person name="Takahashi M."/>
            <person name="Kanda K."/>
            <person name="Yokoi T."/>
            <person name="Furuya T."/>
            <person name="Kikkawa E."/>
            <person name="Omura Y."/>
            <person name="Abe K."/>
            <person name="Kamihara K."/>
            <person name="Katsuta N."/>
            <person name="Sato K."/>
            <person name="Tanikawa M."/>
            <person name="Yamazaki M."/>
            <person name="Ninomiya K."/>
            <person name="Ishibashi T."/>
            <person name="Yamashita H."/>
            <person name="Murakawa K."/>
            <person name="Fujimori K."/>
            <person name="Tanai H."/>
            <person name="Kimata M."/>
            <person name="Watanabe M."/>
            <person name="Hiraoka S."/>
            <person name="Chiba Y."/>
            <person name="Ishida S."/>
            <person name="Ono Y."/>
            <person name="Takiguchi S."/>
            <person name="Watanabe S."/>
            <person name="Yosida M."/>
            <person name="Hotuta T."/>
            <person name="Kusano J."/>
            <person name="Kanehori K."/>
            <person name="Takahashi-Fujii A."/>
            <person name="Hara H."/>
            <person name="Tanase T.-O."/>
            <person name="Nomura Y."/>
            <person name="Togiya S."/>
            <person name="Komai F."/>
            <person name="Hara R."/>
            <person name="Takeuchi K."/>
            <person name="Arita M."/>
            <person name="Imose N."/>
            <person name="Musashino K."/>
            <person name="Yuuki H."/>
            <person name="Oshima A."/>
            <person name="Sasaki N."/>
            <person name="Aotsuka S."/>
            <person name="Yoshikawa Y."/>
            <person name="Matsunawa H."/>
            <person name="Ichihara T."/>
            <person name="Shiohata N."/>
            <person name="Sano S."/>
            <person name="Moriya S."/>
            <person name="Momiyama H."/>
            <person name="Satoh N."/>
            <person name="Takami S."/>
            <person name="Terashima Y."/>
            <person name="Suzuki O."/>
            <person name="Nakagawa S."/>
            <person name="Senoh A."/>
            <person name="Mizoguchi H."/>
            <person name="Goto Y."/>
            <person name="Shimizu F."/>
            <person name="Wakebe H."/>
            <person name="Hishigaki H."/>
            <person name="Watanabe T."/>
            <person name="Sugiyama A."/>
            <person name="Takemoto M."/>
            <person name="Kawakami B."/>
            <person name="Yamazaki M."/>
            <person name="Watanabe K."/>
            <person name="Kumagai A."/>
            <person name="Itakura S."/>
            <person name="Fukuzumi Y."/>
            <person name="Fujimori Y."/>
            <person name="Komiyama M."/>
            <person name="Tashiro H."/>
            <person name="Tanigami A."/>
            <person name="Fujiwara T."/>
            <person name="Ono T."/>
            <person name="Yamada K."/>
            <person name="Fujii Y."/>
            <person name="Ozaki K."/>
            <person name="Hirao M."/>
            <person name="Ohmori Y."/>
            <person name="Kawabata A."/>
            <person name="Hikiji T."/>
            <person name="Kobatake N."/>
            <person name="Inagaki H."/>
            <person name="Ikema Y."/>
            <person name="Okamoto S."/>
            <person name="Okitani R."/>
            <person name="Kawakami T."/>
            <person name="Noguchi S."/>
            <person name="Itoh T."/>
            <person name="Shigeta K."/>
            <person name="Senba T."/>
            <person name="Matsumura K."/>
            <person name="Nakajima Y."/>
            <person name="Mizuno T."/>
            <person name="Morinaga M."/>
            <person name="Sasaki M."/>
            <person name="Togashi T."/>
            <person name="Oyama M."/>
            <person name="Hata H."/>
            <person name="Watanabe M."/>
            <person name="Komatsu T."/>
            <person name="Mizushima-Sugano J."/>
            <person name="Satoh T."/>
            <person name="Shirai Y."/>
            <person name="Takahashi Y."/>
            <person name="Nakagawa K."/>
            <person name="Okumura K."/>
            <person name="Nagase T."/>
            <person name="Nomura N."/>
            <person name="Kikuchi H."/>
            <person name="Masuho Y."/>
            <person name="Yamashita R."/>
            <person name="Nakai K."/>
            <person name="Yada T."/>
            <person name="Nakamura Y."/>
            <person name="Ohara O."/>
            <person name="Isogai T."/>
            <person name="Sugano S."/>
        </authorList>
    </citation>
    <scope>NUCLEOTIDE SEQUENCE [LARGE SCALE MRNA]</scope>
</reference>
<reference key="4">
    <citation type="journal article" date="2000" name="Nature">
        <title>The DNA sequence of human chromosome 21.</title>
        <authorList>
            <person name="Hattori M."/>
            <person name="Fujiyama A."/>
            <person name="Taylor T.D."/>
            <person name="Watanabe H."/>
            <person name="Yada T."/>
            <person name="Park H.-S."/>
            <person name="Toyoda A."/>
            <person name="Ishii K."/>
            <person name="Totoki Y."/>
            <person name="Choi D.-K."/>
            <person name="Groner Y."/>
            <person name="Soeda E."/>
            <person name="Ohki M."/>
            <person name="Takagi T."/>
            <person name="Sakaki Y."/>
            <person name="Taudien S."/>
            <person name="Blechschmidt K."/>
            <person name="Polley A."/>
            <person name="Menzel U."/>
            <person name="Delabar J."/>
            <person name="Kumpf K."/>
            <person name="Lehmann R."/>
            <person name="Patterson D."/>
            <person name="Reichwald K."/>
            <person name="Rump A."/>
            <person name="Schillhabel M."/>
            <person name="Schudy A."/>
            <person name="Zimmermann W."/>
            <person name="Rosenthal A."/>
            <person name="Kudoh J."/>
            <person name="Shibuya K."/>
            <person name="Kawasaki K."/>
            <person name="Asakawa S."/>
            <person name="Shintani A."/>
            <person name="Sasaki T."/>
            <person name="Nagamine K."/>
            <person name="Mitsuyama S."/>
            <person name="Antonarakis S.E."/>
            <person name="Minoshima S."/>
            <person name="Shimizu N."/>
            <person name="Nordsiek G."/>
            <person name="Hornischer K."/>
            <person name="Brandt P."/>
            <person name="Scharfe M."/>
            <person name="Schoen O."/>
            <person name="Desario A."/>
            <person name="Reichelt J."/>
            <person name="Kauer G."/>
            <person name="Bloecker H."/>
            <person name="Ramser J."/>
            <person name="Beck A."/>
            <person name="Klages S."/>
            <person name="Hennig S."/>
            <person name="Riesselmann L."/>
            <person name="Dagand E."/>
            <person name="Wehrmeyer S."/>
            <person name="Borzym K."/>
            <person name="Gardiner K."/>
            <person name="Nizetic D."/>
            <person name="Francis F."/>
            <person name="Lehrach H."/>
            <person name="Reinhardt R."/>
            <person name="Yaspo M.-L."/>
        </authorList>
    </citation>
    <scope>NUCLEOTIDE SEQUENCE [LARGE SCALE GENOMIC DNA]</scope>
</reference>
<reference key="5">
    <citation type="submission" date="2005-09" db="EMBL/GenBank/DDBJ databases">
        <authorList>
            <person name="Mural R.J."/>
            <person name="Istrail S."/>
            <person name="Sutton G.G."/>
            <person name="Florea L."/>
            <person name="Halpern A.L."/>
            <person name="Mobarry C.M."/>
            <person name="Lippert R."/>
            <person name="Walenz B."/>
            <person name="Shatkay H."/>
            <person name="Dew I."/>
            <person name="Miller J.R."/>
            <person name="Flanigan M.J."/>
            <person name="Edwards N.J."/>
            <person name="Bolanos R."/>
            <person name="Fasulo D."/>
            <person name="Halldorsson B.V."/>
            <person name="Hannenhalli S."/>
            <person name="Turner R."/>
            <person name="Yooseph S."/>
            <person name="Lu F."/>
            <person name="Nusskern D.R."/>
            <person name="Shue B.C."/>
            <person name="Zheng X.H."/>
            <person name="Zhong F."/>
            <person name="Delcher A.L."/>
            <person name="Huson D.H."/>
            <person name="Kravitz S.A."/>
            <person name="Mouchard L."/>
            <person name="Reinert K."/>
            <person name="Remington K.A."/>
            <person name="Clark A.G."/>
            <person name="Waterman M.S."/>
            <person name="Eichler E.E."/>
            <person name="Adams M.D."/>
            <person name="Hunkapiller M.W."/>
            <person name="Myers E.W."/>
            <person name="Venter J.C."/>
        </authorList>
    </citation>
    <scope>NUCLEOTIDE SEQUENCE [LARGE SCALE GENOMIC DNA]</scope>
</reference>
<reference key="6">
    <citation type="journal article" date="2004" name="Genome Res.">
        <title>The status, quality, and expansion of the NIH full-length cDNA project: the Mammalian Gene Collection (MGC).</title>
        <authorList>
            <consortium name="The MGC Project Team"/>
        </authorList>
    </citation>
    <scope>NUCLEOTIDE SEQUENCE [LARGE SCALE MRNA]</scope>
    <source>
        <tissue>Colon</tissue>
        <tissue>Lung</tissue>
        <tissue>Muscle</tissue>
        <tissue>Ovary</tissue>
    </source>
</reference>
<reference key="7">
    <citation type="journal article" date="2004" name="J. Bone Miner. Res.">
        <title>Identification of novel genes of the bone-specific transcription factor Runx2.</title>
        <authorList>
            <person name="Stock M."/>
            <person name="Schafer H."/>
            <person name="Fliegauf M."/>
            <person name="Otto F."/>
        </authorList>
    </citation>
    <scope>INDUCTION</scope>
</reference>
<gene>
    <name type="primary">PTTG1IP</name>
    <name type="synonym">C21orf1</name>
    <name type="synonym">C21orf3</name>
</gene>
<organism>
    <name type="scientific">Homo sapiens</name>
    <name type="common">Human</name>
    <dbReference type="NCBI Taxonomy" id="9606"/>
    <lineage>
        <taxon>Eukaryota</taxon>
        <taxon>Metazoa</taxon>
        <taxon>Chordata</taxon>
        <taxon>Craniata</taxon>
        <taxon>Vertebrata</taxon>
        <taxon>Euteleostomi</taxon>
        <taxon>Mammalia</taxon>
        <taxon>Eutheria</taxon>
        <taxon>Euarchontoglires</taxon>
        <taxon>Primates</taxon>
        <taxon>Haplorrhini</taxon>
        <taxon>Catarrhini</taxon>
        <taxon>Hominidae</taxon>
        <taxon>Homo</taxon>
    </lineage>
</organism>
<dbReference type="EMBL" id="Z50022">
    <property type="protein sequence ID" value="CAA90325.1"/>
    <property type="molecule type" value="mRNA"/>
</dbReference>
<dbReference type="EMBL" id="AF149785">
    <property type="protein sequence ID" value="AAF73770.1"/>
    <property type="molecule type" value="mRNA"/>
</dbReference>
<dbReference type="EMBL" id="AK315626">
    <property type="protein sequence ID" value="BAG37994.1"/>
    <property type="molecule type" value="mRNA"/>
</dbReference>
<dbReference type="EMBL" id="AL163300">
    <property type="protein sequence ID" value="CAB90552.1"/>
    <property type="molecule type" value="Genomic_DNA"/>
</dbReference>
<dbReference type="EMBL" id="CH471079">
    <property type="protein sequence ID" value="EAX09386.1"/>
    <property type="molecule type" value="Genomic_DNA"/>
</dbReference>
<dbReference type="EMBL" id="CH471079">
    <property type="protein sequence ID" value="EAX09388.1"/>
    <property type="molecule type" value="Genomic_DNA"/>
</dbReference>
<dbReference type="EMBL" id="BC000415">
    <property type="protein sequence ID" value="AAH00415.1"/>
    <property type="molecule type" value="mRNA"/>
</dbReference>
<dbReference type="EMBL" id="BC012858">
    <property type="protein sequence ID" value="AAH12858.1"/>
    <property type="molecule type" value="mRNA"/>
</dbReference>
<dbReference type="EMBL" id="BC019295">
    <property type="protein sequence ID" value="AAH19295.1"/>
    <property type="molecule type" value="mRNA"/>
</dbReference>
<dbReference type="EMBL" id="BC020983">
    <property type="protein sequence ID" value="AAH20983.1"/>
    <property type="molecule type" value="mRNA"/>
</dbReference>
<dbReference type="EMBL" id="BC031097">
    <property type="protein sequence ID" value="AAH31097.1"/>
    <property type="molecule type" value="mRNA"/>
</dbReference>
<dbReference type="EMBL" id="BC034250">
    <property type="protein sequence ID" value="AAH34250.1"/>
    <property type="molecule type" value="mRNA"/>
</dbReference>
<dbReference type="CCDS" id="CCDS13715.1"/>
<dbReference type="RefSeq" id="NP_001273751.1">
    <property type="nucleotide sequence ID" value="NM_001286822.1"/>
</dbReference>
<dbReference type="RefSeq" id="NP_004330.1">
    <property type="nucleotide sequence ID" value="NM_004339.4"/>
</dbReference>
<dbReference type="SMR" id="P53801"/>
<dbReference type="BioGRID" id="107210">
    <property type="interactions" value="56"/>
</dbReference>
<dbReference type="FunCoup" id="P53801">
    <property type="interactions" value="1262"/>
</dbReference>
<dbReference type="IntAct" id="P53801">
    <property type="interactions" value="36"/>
</dbReference>
<dbReference type="MINT" id="P53801"/>
<dbReference type="STRING" id="9606.ENSP00000328325"/>
<dbReference type="GlyConnect" id="1607">
    <property type="glycosylation" value="5 N-Linked glycans (1 site)"/>
</dbReference>
<dbReference type="GlyCosmos" id="P53801">
    <property type="glycosylation" value="2 sites, 5 glycans"/>
</dbReference>
<dbReference type="GlyGen" id="P53801">
    <property type="glycosylation" value="4 sites, 26 N-linked glycans (1 site), 1 O-linked glycan (1 site)"/>
</dbReference>
<dbReference type="iPTMnet" id="P53801"/>
<dbReference type="PhosphoSitePlus" id="P53801"/>
<dbReference type="SwissPalm" id="P53801"/>
<dbReference type="BioMuta" id="PTTG1IP"/>
<dbReference type="DMDM" id="1711387"/>
<dbReference type="jPOST" id="P53801"/>
<dbReference type="MassIVE" id="P53801"/>
<dbReference type="PaxDb" id="9606-ENSP00000328325"/>
<dbReference type="PeptideAtlas" id="P53801"/>
<dbReference type="ProteomicsDB" id="56621"/>
<dbReference type="Pumba" id="P53801"/>
<dbReference type="Antibodypedia" id="24351">
    <property type="antibodies" value="168 antibodies from 30 providers"/>
</dbReference>
<dbReference type="DNASU" id="754"/>
<dbReference type="Ensembl" id="ENST00000330938.8">
    <property type="protein sequence ID" value="ENSP00000328325.3"/>
    <property type="gene ID" value="ENSG00000183255.12"/>
</dbReference>
<dbReference type="GeneID" id="754"/>
<dbReference type="KEGG" id="hsa:754"/>
<dbReference type="MANE-Select" id="ENST00000330938.8">
    <property type="protein sequence ID" value="ENSP00000328325.3"/>
    <property type="RefSeq nucleotide sequence ID" value="NM_004339.4"/>
    <property type="RefSeq protein sequence ID" value="NP_004330.1"/>
</dbReference>
<dbReference type="UCSC" id="uc002zgb.3">
    <property type="organism name" value="human"/>
</dbReference>
<dbReference type="AGR" id="HGNC:13524"/>
<dbReference type="CTD" id="754"/>
<dbReference type="DisGeNET" id="754"/>
<dbReference type="GeneCards" id="PTTG1IP"/>
<dbReference type="HGNC" id="HGNC:13524">
    <property type="gene designation" value="PTTG1IP"/>
</dbReference>
<dbReference type="HPA" id="ENSG00000183255">
    <property type="expression patterns" value="Low tissue specificity"/>
</dbReference>
<dbReference type="MIM" id="603784">
    <property type="type" value="gene"/>
</dbReference>
<dbReference type="neXtProt" id="NX_P53801"/>
<dbReference type="OpenTargets" id="ENSG00000183255"/>
<dbReference type="PharmGKB" id="PA34034"/>
<dbReference type="VEuPathDB" id="HostDB:ENSG00000183255"/>
<dbReference type="eggNOG" id="ENOG502RYM1">
    <property type="taxonomic scope" value="Eukaryota"/>
</dbReference>
<dbReference type="GeneTree" id="ENSGT00390000004977"/>
<dbReference type="HOGENOM" id="CLU_109415_0_0_1"/>
<dbReference type="InParanoid" id="P53801"/>
<dbReference type="OMA" id="CVEYPVR"/>
<dbReference type="OrthoDB" id="5829916at2759"/>
<dbReference type="PAN-GO" id="P53801">
    <property type="GO annotations" value="3 GO annotations based on evolutionary models"/>
</dbReference>
<dbReference type="PhylomeDB" id="P53801"/>
<dbReference type="TreeFam" id="TF329310"/>
<dbReference type="PathwayCommons" id="P53801"/>
<dbReference type="SignaLink" id="P53801"/>
<dbReference type="SIGNOR" id="P53801"/>
<dbReference type="BioGRID-ORCS" id="754">
    <property type="hits" value="11 hits in 1165 CRISPR screens"/>
</dbReference>
<dbReference type="ChiTaRS" id="PTTG1IP">
    <property type="organism name" value="human"/>
</dbReference>
<dbReference type="GeneWiki" id="PTTG1IP"/>
<dbReference type="GenomeRNAi" id="754"/>
<dbReference type="Pharos" id="P53801">
    <property type="development level" value="Tbio"/>
</dbReference>
<dbReference type="PRO" id="PR:P53801"/>
<dbReference type="Proteomes" id="UP000005640">
    <property type="component" value="Chromosome 21"/>
</dbReference>
<dbReference type="RNAct" id="P53801">
    <property type="molecule type" value="protein"/>
</dbReference>
<dbReference type="Bgee" id="ENSG00000183255">
    <property type="expression patterns" value="Expressed in visceral pleura and 209 other cell types or tissues"/>
</dbReference>
<dbReference type="ExpressionAtlas" id="P53801">
    <property type="expression patterns" value="baseline and differential"/>
</dbReference>
<dbReference type="GO" id="GO:0005737">
    <property type="term" value="C:cytoplasm"/>
    <property type="evidence" value="ECO:0000314"/>
    <property type="project" value="UniProtKB"/>
</dbReference>
<dbReference type="GO" id="GO:0070062">
    <property type="term" value="C:extracellular exosome"/>
    <property type="evidence" value="ECO:0007005"/>
    <property type="project" value="UniProtKB"/>
</dbReference>
<dbReference type="GO" id="GO:0016020">
    <property type="term" value="C:membrane"/>
    <property type="evidence" value="ECO:0007005"/>
    <property type="project" value="UniProtKB"/>
</dbReference>
<dbReference type="GO" id="GO:0005654">
    <property type="term" value="C:nucleoplasm"/>
    <property type="evidence" value="ECO:0000314"/>
    <property type="project" value="HPA"/>
</dbReference>
<dbReference type="GO" id="GO:0005634">
    <property type="term" value="C:nucleus"/>
    <property type="evidence" value="ECO:0000314"/>
    <property type="project" value="UniProtKB"/>
</dbReference>
<dbReference type="GO" id="GO:0002039">
    <property type="term" value="F:p53 binding"/>
    <property type="evidence" value="ECO:0000353"/>
    <property type="project" value="MGI"/>
</dbReference>
<dbReference type="GO" id="GO:0043518">
    <property type="term" value="P:negative regulation of DNA damage response, signal transduction by p53 class mediator"/>
    <property type="evidence" value="ECO:0000315"/>
    <property type="project" value="MGI"/>
</dbReference>
<dbReference type="GO" id="GO:1902254">
    <property type="term" value="P:negative regulation of intrinsic apoptotic signaling pathway by p53 class mediator"/>
    <property type="evidence" value="ECO:0000315"/>
    <property type="project" value="MGI"/>
</dbReference>
<dbReference type="GO" id="GO:0031398">
    <property type="term" value="P:positive regulation of protein ubiquitination"/>
    <property type="evidence" value="ECO:0000314"/>
    <property type="project" value="MGI"/>
</dbReference>
<dbReference type="GO" id="GO:0006606">
    <property type="term" value="P:protein import into nucleus"/>
    <property type="evidence" value="ECO:0000314"/>
    <property type="project" value="UniProtKB"/>
</dbReference>
<dbReference type="InterPro" id="IPR016201">
    <property type="entry name" value="PSI"/>
</dbReference>
<dbReference type="InterPro" id="IPR052304">
    <property type="entry name" value="PTTG1IP"/>
</dbReference>
<dbReference type="PANTHER" id="PTHR15191:SF14">
    <property type="entry name" value="PITUITARY TUMOR-TRANSFORMING GENE 1 PROTEIN-INTERACTING PROTEIN"/>
    <property type="match status" value="1"/>
</dbReference>
<dbReference type="PANTHER" id="PTHR15191">
    <property type="entry name" value="PROTEIN CBG20567"/>
    <property type="match status" value="1"/>
</dbReference>
<dbReference type="SMART" id="SM00423">
    <property type="entry name" value="PSI"/>
    <property type="match status" value="1"/>
</dbReference>
<accession>P53801</accession>
<accession>B2RDP7</accession>
<accession>D3DSL9</accession>
<accession>Q9NS09</accession>
<feature type="signal peptide" evidence="2">
    <location>
        <begin position="1"/>
        <end position="32"/>
    </location>
</feature>
<feature type="chain" id="PRO_0000022184" description="Pituitary tumor-transforming gene 1 protein-interacting protein">
    <location>
        <begin position="33"/>
        <end position="180"/>
    </location>
</feature>
<feature type="topological domain" description="Extracellular" evidence="2">
    <location>
        <begin position="33"/>
        <end position="96"/>
    </location>
</feature>
<feature type="transmembrane region" description="Helical" evidence="2">
    <location>
        <begin position="97"/>
        <end position="117"/>
    </location>
</feature>
<feature type="topological domain" description="Cytoplasmic" evidence="2">
    <location>
        <begin position="118"/>
        <end position="180"/>
    </location>
</feature>
<feature type="domain" description="PSI">
    <location>
        <begin position="39"/>
        <end position="92"/>
    </location>
</feature>
<feature type="region of interest" description="Disordered" evidence="3">
    <location>
        <begin position="131"/>
        <end position="157"/>
    </location>
</feature>
<feature type="coiled-coil region" evidence="2">
    <location>
        <begin position="130"/>
        <end position="165"/>
    </location>
</feature>
<feature type="modified residue" description="Phosphotyrosine" evidence="1">
    <location>
        <position position="174"/>
    </location>
</feature>
<feature type="glycosylation site" description="N-linked (GlcNAc...) asparagine" evidence="2">
    <location>
        <position position="45"/>
    </location>
</feature>
<feature type="glycosylation site" description="N-linked (GlcNAc...) asparagine" evidence="2">
    <location>
        <position position="54"/>
    </location>
</feature>
<feature type="sequence conflict" description="In Ref. 2; AAF73770." evidence="6" ref="2">
    <original>PTPYWRLRLGG</original>
    <variation>ARRTGGCASV</variation>
    <location>
        <begin position="9"/>
        <end position="19"/>
    </location>
</feature>
<feature type="sequence conflict" description="In Ref. 2; AAF73770." evidence="6" ref="2">
    <original>TLLLGIA</original>
    <variation>NPPPGHC</variation>
    <location>
        <begin position="108"/>
        <end position="114"/>
    </location>
</feature>
<evidence type="ECO:0000250" key="1">
    <source>
        <dbReference type="UniProtKB" id="Q8R143"/>
    </source>
</evidence>
<evidence type="ECO:0000255" key="2"/>
<evidence type="ECO:0000256" key="3">
    <source>
        <dbReference type="SAM" id="MobiDB-lite"/>
    </source>
</evidence>
<evidence type="ECO:0000269" key="4">
    <source>
    </source>
</evidence>
<evidence type="ECO:0000269" key="5">
    <source>
    </source>
</evidence>
<evidence type="ECO:0000305" key="6"/>
<sequence length="180" mass="20324">MAPGVARGPTPYWRLRLGGAALLLLLIPVAAAQEPPGAACSQNTNKTCEECLKNVSCLWCNTNKACLDYPVTSVLPPASLCKLSSARWGVCWVNFEALIITMSVVGGTLLLGIAICCCCCCRRKRSRKPDRSEEKAMREREERRIRQEERRAEMKTRHDEIRKKYGLFKEENPYARFENN</sequence>
<comment type="function">
    <text>May facilitate PTTG1 nuclear translocation.</text>
</comment>
<comment type="subunit">
    <text evidence="4">Interacts with PTTG1.</text>
</comment>
<comment type="interaction">
    <interactant intactId="EBI-3906138">
        <id>P53801</id>
    </interactant>
    <interactant intactId="EBI-19125216">
        <id>Q86WK6</id>
        <label>AMIGO1</label>
    </interactant>
    <organismsDiffer>false</organismsDiffer>
    <experiments>3</experiments>
</comment>
<comment type="interaction">
    <interactant intactId="EBI-3906138">
        <id>P53801</id>
    </interactant>
    <interactant intactId="EBI-11954292">
        <id>Q86V38</id>
        <label>ATN1</label>
    </interactant>
    <organismsDiffer>false</organismsDiffer>
    <experiments>3</experiments>
</comment>
<comment type="interaction">
    <interactant intactId="EBI-3906138">
        <id>P53801</id>
    </interactant>
    <interactant intactId="EBI-2512037">
        <id>O75787</id>
        <label>ATP6AP2</label>
    </interactant>
    <organismsDiffer>false</organismsDiffer>
    <experiments>3</experiments>
</comment>
<comment type="interaction">
    <interactant intactId="EBI-3906138">
        <id>P53801</id>
    </interactant>
    <interactant intactId="EBI-3939278">
        <id>Q9BXN2</id>
        <label>CLEC7A</label>
    </interactant>
    <organismsDiffer>false</organismsDiffer>
    <experiments>3</experiments>
</comment>
<comment type="interaction">
    <interactant intactId="EBI-3906138">
        <id>P53801</id>
    </interactant>
    <interactant intactId="EBI-11989440">
        <id>Q9BXN2-6</id>
        <label>CLEC7A</label>
    </interactant>
    <organismsDiffer>false</organismsDiffer>
    <experiments>3</experiments>
</comment>
<comment type="interaction">
    <interactant intactId="EBI-3906138">
        <id>P53801</id>
    </interactant>
    <interactant intactId="EBI-6875961">
        <id>P02489</id>
        <label>CRYAA</label>
    </interactant>
    <organismsDiffer>false</organismsDiffer>
    <experiments>3</experiments>
</comment>
<comment type="interaction">
    <interactant intactId="EBI-3906138">
        <id>P53801</id>
    </interactant>
    <interactant intactId="EBI-2432309">
        <id>Q92876</id>
        <label>KLK6</label>
    </interactant>
    <organismsDiffer>false</organismsDiffer>
    <experiments>3</experiments>
</comment>
<comment type="interaction">
    <interactant intactId="EBI-3906138">
        <id>P53801</id>
    </interactant>
    <interactant intactId="EBI-10173166">
        <id>Q5T700</id>
        <label>LDLRAD1</label>
    </interactant>
    <organismsDiffer>false</organismsDiffer>
    <experiments>3</experiments>
</comment>
<comment type="interaction">
    <interactant intactId="EBI-3906138">
        <id>P53801</id>
    </interactant>
    <interactant intactId="EBI-6655935">
        <id>P23219</id>
        <label>PTGS1</label>
    </interactant>
    <organismsDiffer>false</organismsDiffer>
    <experiments>3</experiments>
</comment>
<comment type="interaction">
    <interactant intactId="EBI-3906138">
        <id>P53801</id>
    </interactant>
    <interactant intactId="EBI-5663627">
        <id>Q16585</id>
        <label>SGCB</label>
    </interactant>
    <organismsDiffer>false</organismsDiffer>
    <experiments>3</experiments>
</comment>
<comment type="interaction">
    <interactant intactId="EBI-3906138">
        <id>P53801</id>
    </interactant>
    <interactant intactId="EBI-12081840">
        <id>A1A5C7-2</id>
        <label>SLC22A23</label>
    </interactant>
    <organismsDiffer>false</organismsDiffer>
    <experiments>3</experiments>
</comment>
<comment type="interaction">
    <interactant intactId="EBI-3906138">
        <id>P53801</id>
    </interactant>
    <interactant intactId="EBI-2821497">
        <id>Q9BVX2</id>
        <label>TMEM106C</label>
    </interactant>
    <organismsDiffer>false</organismsDiffer>
    <experiments>3</experiments>
</comment>
<comment type="interaction">
    <interactant intactId="EBI-3906138">
        <id>P53801</id>
    </interactant>
    <interactant intactId="EBI-12345267">
        <id>O15393-2</id>
        <label>TMPRSS2</label>
    </interactant>
    <organismsDiffer>false</organismsDiffer>
    <experiments>3</experiments>
</comment>
<comment type="interaction">
    <interactant intactId="EBI-3906138">
        <id>P53801</id>
    </interactant>
    <interactant intactId="EBI-524131">
        <id>O43557</id>
        <label>TNFSF14</label>
    </interactant>
    <organismsDiffer>false</organismsDiffer>
    <experiments>3</experiments>
</comment>
<comment type="subcellular location">
    <subcellularLocation>
        <location evidence="6">Membrane</location>
        <topology evidence="6">Single-pass type I membrane protein</topology>
    </subcellularLocation>
    <subcellularLocation>
        <location evidence="4">Cytoplasm</location>
    </subcellularLocation>
    <subcellularLocation>
        <location evidence="4">Nucleus</location>
    </subcellularLocation>
    <text>According to PubMed:10781616, it is found in the cytoplasm and the nucleus.</text>
</comment>
<comment type="tissue specificity">
    <text>Ubiquitous.</text>
</comment>
<comment type="induction">
    <text evidence="5">By transcription factor RUNX2.</text>
</comment>
<comment type="online information" name="Atlas of Genetics and Cytogenetics in Oncology and Haematology">
    <link uri="https://atlasgeneticsoncology.org/gene/41944/PTTG1IP"/>
</comment>
<name>PTTG_HUMAN</name>